<comment type="function">
    <text evidence="1">Acts in the modification of cell walls via demethylesterification of cell wall pectin.</text>
</comment>
<comment type="catalytic activity">
    <reaction>
        <text>[(1-&gt;4)-alpha-D-galacturonosyl methyl ester](n) + n H2O = [(1-&gt;4)-alpha-D-galacturonosyl](n) + n methanol + n H(+)</text>
        <dbReference type="Rhea" id="RHEA:22380"/>
        <dbReference type="Rhea" id="RHEA-COMP:14570"/>
        <dbReference type="Rhea" id="RHEA-COMP:14573"/>
        <dbReference type="ChEBI" id="CHEBI:15377"/>
        <dbReference type="ChEBI" id="CHEBI:15378"/>
        <dbReference type="ChEBI" id="CHEBI:17790"/>
        <dbReference type="ChEBI" id="CHEBI:140522"/>
        <dbReference type="ChEBI" id="CHEBI:140523"/>
        <dbReference type="EC" id="3.1.1.11"/>
    </reaction>
</comment>
<comment type="pathway">
    <text>Glycan metabolism; pectin degradation; 2-dehydro-3-deoxy-D-gluconate from pectin: step 1/5.</text>
</comment>
<comment type="subcellular location">
    <subcellularLocation>
        <location evidence="7">Membrane</location>
        <topology evidence="7">Single-pass membrane protein</topology>
    </subcellularLocation>
</comment>
<comment type="tissue specificity">
    <text evidence="5 6">Expressed in siliques, floral stems and rosettes leaves.</text>
</comment>
<comment type="developmental stage">
    <text evidence="5">Expressed throughout silique development.</text>
</comment>
<comment type="miscellaneous">
    <text>The PMEI region may act as an autoinhibitory domain and prevent untimely PME activity during transport.</text>
</comment>
<comment type="similarity">
    <text evidence="7">In the N-terminal section; belongs to the PMEI family.</text>
</comment>
<comment type="similarity">
    <text evidence="7">In the C-terminal section; belongs to the pectinesterase family.</text>
</comment>
<gene>
    <name type="primary">PME61</name>
    <name type="synonym">ARATH61</name>
    <name type="ordered locus">At5g53370</name>
    <name type="ORF">K19E1.17</name>
</gene>
<accession>Q9FK05</accession>
<evidence type="ECO:0000250" key="1"/>
<evidence type="ECO:0000255" key="2"/>
<evidence type="ECO:0000255" key="3">
    <source>
        <dbReference type="PROSITE-ProRule" id="PRU10040"/>
    </source>
</evidence>
<evidence type="ECO:0000256" key="4">
    <source>
        <dbReference type="SAM" id="MobiDB-lite"/>
    </source>
</evidence>
<evidence type="ECO:0000269" key="5">
    <source>
    </source>
</evidence>
<evidence type="ECO:0000269" key="6">
    <source>
    </source>
</evidence>
<evidence type="ECO:0000305" key="7"/>
<sequence>MGYDRLGPSGPSNPNQKDPATSLPELQKKTKTKLILFTLAVLVVGVVCFGIFAGIRAVDSGKTEPKLTRKPTQAISRTCSKSLYPNLCIDTLLDFPGSLTADENELIHISFNATLQKFSKALYTSSTITYTQMPPRVRSAYDSCLELLDDSVDALTRALSSVVVVSGDESHSDVMTWLSSAMTNHDTCTDGFDEIEGQGGEVKDQVIGAVKDLSEMVSNCLAIFAGKVKDLSGVPVVNNRKLLGTEETEELPNWLKREDRELLGTPTSAIQADITVSKDGSGTFKTIAEAIKKAPEHSSRRFVIYVKAGRYEEENLKVGRKKTNLMFIGDGKGKTVITGGKSIADDLTTFHTATFAATGAGFIVRDMTFENYAGPAKHQAVALRVGGDHAVVYRCNIIGYQDALYVHSNRQFFRECEIYGTVDFIFGNAAVILQSCNIYARKPMAQQKITITAQNRKDPNQNTGISIHACKLLATPDLEASKGSYPTYLGRPWKLYSRVVYMMSDMGDHIDPRGWLEWNGPFALDSLYYGEYMNKGLGSGIGQRVKWPGYHVITSTVEASKFTVAQFISGSSWLPSTGVSFFSGLSQ</sequence>
<reference key="1">
    <citation type="journal article" date="1998" name="DNA Res.">
        <title>Structural analysis of Arabidopsis thaliana chromosome 5. VI. Sequence features of the regions of 1,367,185 bp covered by 19 physically assigned P1 and TAC clones.</title>
        <authorList>
            <person name="Kotani H."/>
            <person name="Nakamura Y."/>
            <person name="Sato S."/>
            <person name="Asamizu E."/>
            <person name="Kaneko T."/>
            <person name="Miyajima N."/>
            <person name="Tabata S."/>
        </authorList>
    </citation>
    <scope>NUCLEOTIDE SEQUENCE [LARGE SCALE GENOMIC DNA]</scope>
    <source>
        <strain>cv. Columbia</strain>
    </source>
</reference>
<reference key="2">
    <citation type="journal article" date="2017" name="Plant J.">
        <title>Araport11: a complete reannotation of the Arabidopsis thaliana reference genome.</title>
        <authorList>
            <person name="Cheng C.Y."/>
            <person name="Krishnakumar V."/>
            <person name="Chan A.P."/>
            <person name="Thibaud-Nissen F."/>
            <person name="Schobel S."/>
            <person name="Town C.D."/>
        </authorList>
    </citation>
    <scope>GENOME REANNOTATION</scope>
    <source>
        <strain>cv. Columbia</strain>
    </source>
</reference>
<reference key="3">
    <citation type="journal article" date="2003" name="Science">
        <title>Empirical analysis of transcriptional activity in the Arabidopsis genome.</title>
        <authorList>
            <person name="Yamada K."/>
            <person name="Lim J."/>
            <person name="Dale J.M."/>
            <person name="Chen H."/>
            <person name="Shinn P."/>
            <person name="Palm C.J."/>
            <person name="Southwick A.M."/>
            <person name="Wu H.C."/>
            <person name="Kim C.J."/>
            <person name="Nguyen M."/>
            <person name="Pham P.K."/>
            <person name="Cheuk R.F."/>
            <person name="Karlin-Newmann G."/>
            <person name="Liu S.X."/>
            <person name="Lam B."/>
            <person name="Sakano H."/>
            <person name="Wu T."/>
            <person name="Yu G."/>
            <person name="Miranda M."/>
            <person name="Quach H.L."/>
            <person name="Tripp M."/>
            <person name="Chang C.H."/>
            <person name="Lee J.M."/>
            <person name="Toriumi M.J."/>
            <person name="Chan M.M."/>
            <person name="Tang C.C."/>
            <person name="Onodera C.S."/>
            <person name="Deng J.M."/>
            <person name="Akiyama K."/>
            <person name="Ansari Y."/>
            <person name="Arakawa T."/>
            <person name="Banh J."/>
            <person name="Banno F."/>
            <person name="Bowser L."/>
            <person name="Brooks S.Y."/>
            <person name="Carninci P."/>
            <person name="Chao Q."/>
            <person name="Choy N."/>
            <person name="Enju A."/>
            <person name="Goldsmith A.D."/>
            <person name="Gurjal M."/>
            <person name="Hansen N.F."/>
            <person name="Hayashizaki Y."/>
            <person name="Johnson-Hopson C."/>
            <person name="Hsuan V.W."/>
            <person name="Iida K."/>
            <person name="Karnes M."/>
            <person name="Khan S."/>
            <person name="Koesema E."/>
            <person name="Ishida J."/>
            <person name="Jiang P.X."/>
            <person name="Jones T."/>
            <person name="Kawai J."/>
            <person name="Kamiya A."/>
            <person name="Meyers C."/>
            <person name="Nakajima M."/>
            <person name="Narusaka M."/>
            <person name="Seki M."/>
            <person name="Sakurai T."/>
            <person name="Satou M."/>
            <person name="Tamse R."/>
            <person name="Vaysberg M."/>
            <person name="Wallender E.K."/>
            <person name="Wong C."/>
            <person name="Yamamura Y."/>
            <person name="Yuan S."/>
            <person name="Shinozaki K."/>
            <person name="Davis R.W."/>
            <person name="Theologis A."/>
            <person name="Ecker J.R."/>
        </authorList>
    </citation>
    <scope>NUCLEOTIDE SEQUENCE [LARGE SCALE MRNA]</scope>
    <source>
        <strain>cv. Columbia</strain>
    </source>
</reference>
<reference key="4">
    <citation type="journal article" date="1998" name="Gene">
        <title>Characterization of the pectin methylesterase-like gene AtPME3: a new member of a gene family comprising at least 12 genes in Arabidopsis thaliana.</title>
        <authorList>
            <person name="Micheli F."/>
            <person name="Holliger C."/>
            <person name="Goldberg R."/>
            <person name="Richard L."/>
        </authorList>
    </citation>
    <scope>TISSUE SPECIFICITY</scope>
</reference>
<reference key="5">
    <citation type="journal article" date="2004" name="Carbohydr. Res.">
        <title>Pectin methylesterases: sequence-structural features and phylogenetic relationships.</title>
        <authorList>
            <person name="Markovic O."/>
            <person name="Janecek S."/>
        </authorList>
    </citation>
    <scope>GENE FAMILY</scope>
    <scope>NOMENCLATURE</scope>
</reference>
<reference key="6">
    <citation type="journal article" date="2006" name="Planta">
        <title>Comprehensive expression profiling of the pectin methylesterase gene family during silique development in Arabidopsis thaliana.</title>
        <authorList>
            <person name="Louvet R."/>
            <person name="Cavel E."/>
            <person name="Gutierrez L."/>
            <person name="Guenin S."/>
            <person name="Roger D."/>
            <person name="Gillet F."/>
            <person name="Guerineau F."/>
            <person name="Pelloux J."/>
        </authorList>
    </citation>
    <scope>TISSUE SPECIFICITY</scope>
    <scope>DEVELOPMENTAL STAGE</scope>
</reference>
<keyword id="KW-0063">Aspartyl esterase</keyword>
<keyword id="KW-0961">Cell wall biogenesis/degradation</keyword>
<keyword id="KW-1015">Disulfide bond</keyword>
<keyword id="KW-0378">Hydrolase</keyword>
<keyword id="KW-0472">Membrane</keyword>
<keyword id="KW-1185">Reference proteome</keyword>
<keyword id="KW-0812">Transmembrane</keyword>
<keyword id="KW-1133">Transmembrane helix</keyword>
<protein>
    <recommendedName>
        <fullName>Probable pectinesterase/pectinesterase inhibitor 61</fullName>
    </recommendedName>
    <domain>
        <recommendedName>
            <fullName>Pectinesterase inhibitor 61</fullName>
        </recommendedName>
        <alternativeName>
            <fullName>Pectin methylesterase inhibitor 61</fullName>
        </alternativeName>
    </domain>
    <domain>
        <recommendedName>
            <fullName>Pectinesterase 61</fullName>
            <shortName>PE 61</shortName>
            <ecNumber>3.1.1.11</ecNumber>
        </recommendedName>
        <alternativeName>
            <fullName>AtPMEpcrF</fullName>
        </alternativeName>
        <alternativeName>
            <fullName>Pectin methylesterase 61</fullName>
            <shortName>AtPME61</shortName>
        </alternativeName>
    </domain>
</protein>
<proteinExistence type="evidence at transcript level"/>
<name>PME61_ARATH</name>
<organism>
    <name type="scientific">Arabidopsis thaliana</name>
    <name type="common">Mouse-ear cress</name>
    <dbReference type="NCBI Taxonomy" id="3702"/>
    <lineage>
        <taxon>Eukaryota</taxon>
        <taxon>Viridiplantae</taxon>
        <taxon>Streptophyta</taxon>
        <taxon>Embryophyta</taxon>
        <taxon>Tracheophyta</taxon>
        <taxon>Spermatophyta</taxon>
        <taxon>Magnoliopsida</taxon>
        <taxon>eudicotyledons</taxon>
        <taxon>Gunneridae</taxon>
        <taxon>Pentapetalae</taxon>
        <taxon>rosids</taxon>
        <taxon>malvids</taxon>
        <taxon>Brassicales</taxon>
        <taxon>Brassicaceae</taxon>
        <taxon>Camelineae</taxon>
        <taxon>Arabidopsis</taxon>
    </lineage>
</organism>
<dbReference type="EC" id="3.1.1.11"/>
<dbReference type="EMBL" id="AB013388">
    <property type="protein sequence ID" value="BAB09799.1"/>
    <property type="molecule type" value="Genomic_DNA"/>
</dbReference>
<dbReference type="EMBL" id="CP002688">
    <property type="protein sequence ID" value="AED96345.1"/>
    <property type="molecule type" value="Genomic_DNA"/>
</dbReference>
<dbReference type="EMBL" id="AF360340">
    <property type="protein sequence ID" value="AAK28637.1"/>
    <property type="molecule type" value="mRNA"/>
</dbReference>
<dbReference type="EMBL" id="AY051077">
    <property type="protein sequence ID" value="AAK93754.1"/>
    <property type="molecule type" value="mRNA"/>
</dbReference>
<dbReference type="RefSeq" id="NP_200149.1">
    <property type="nucleotide sequence ID" value="NM_124716.3"/>
</dbReference>
<dbReference type="SMR" id="Q9FK05"/>
<dbReference type="FunCoup" id="Q9FK05">
    <property type="interactions" value="70"/>
</dbReference>
<dbReference type="STRING" id="3702.Q9FK05"/>
<dbReference type="iPTMnet" id="Q9FK05"/>
<dbReference type="PaxDb" id="3702-AT5G53370.1"/>
<dbReference type="ProteomicsDB" id="226183"/>
<dbReference type="EnsemblPlants" id="AT5G53370.1">
    <property type="protein sequence ID" value="AT5G53370.1"/>
    <property type="gene ID" value="AT5G53370"/>
</dbReference>
<dbReference type="GeneID" id="835418"/>
<dbReference type="Gramene" id="AT5G53370.1">
    <property type="protein sequence ID" value="AT5G53370.1"/>
    <property type="gene ID" value="AT5G53370"/>
</dbReference>
<dbReference type="KEGG" id="ath:AT5G53370"/>
<dbReference type="Araport" id="AT5G53370"/>
<dbReference type="TAIR" id="AT5G53370">
    <property type="gene designation" value="PMEPCRF"/>
</dbReference>
<dbReference type="eggNOG" id="ENOG502QRD0">
    <property type="taxonomic scope" value="Eukaryota"/>
</dbReference>
<dbReference type="HOGENOM" id="CLU_012243_9_1_1"/>
<dbReference type="InParanoid" id="Q9FK05"/>
<dbReference type="OMA" id="ENWAGPT"/>
<dbReference type="OrthoDB" id="2019149at2759"/>
<dbReference type="PhylomeDB" id="Q9FK05"/>
<dbReference type="UniPathway" id="UPA00545">
    <property type="reaction ID" value="UER00823"/>
</dbReference>
<dbReference type="PRO" id="PR:Q9FK05"/>
<dbReference type="Proteomes" id="UP000006548">
    <property type="component" value="Chromosome 5"/>
</dbReference>
<dbReference type="ExpressionAtlas" id="Q9FK05">
    <property type="expression patterns" value="baseline and differential"/>
</dbReference>
<dbReference type="GO" id="GO:0016020">
    <property type="term" value="C:membrane"/>
    <property type="evidence" value="ECO:0007669"/>
    <property type="project" value="UniProtKB-SubCell"/>
</dbReference>
<dbReference type="GO" id="GO:0004857">
    <property type="term" value="F:enzyme inhibitor activity"/>
    <property type="evidence" value="ECO:0007669"/>
    <property type="project" value="InterPro"/>
</dbReference>
<dbReference type="GO" id="GO:0030599">
    <property type="term" value="F:pectinesterase activity"/>
    <property type="evidence" value="ECO:0000250"/>
    <property type="project" value="TAIR"/>
</dbReference>
<dbReference type="GO" id="GO:0042545">
    <property type="term" value="P:cell wall modification"/>
    <property type="evidence" value="ECO:0007669"/>
    <property type="project" value="InterPro"/>
</dbReference>
<dbReference type="GO" id="GO:0045490">
    <property type="term" value="P:pectin catabolic process"/>
    <property type="evidence" value="ECO:0007669"/>
    <property type="project" value="UniProtKB-UniPathway"/>
</dbReference>
<dbReference type="CDD" id="cd15798">
    <property type="entry name" value="PMEI-like_3"/>
    <property type="match status" value="1"/>
</dbReference>
<dbReference type="FunFam" id="1.20.140.40:FF:000012">
    <property type="entry name" value="Pectinesterase"/>
    <property type="match status" value="1"/>
</dbReference>
<dbReference type="FunFam" id="2.160.20.10:FF:000001">
    <property type="entry name" value="Pectinesterase"/>
    <property type="match status" value="1"/>
</dbReference>
<dbReference type="Gene3D" id="1.20.140.40">
    <property type="entry name" value="Invertase/pectin methylesterase inhibitor family protein"/>
    <property type="match status" value="1"/>
</dbReference>
<dbReference type="Gene3D" id="2.160.20.10">
    <property type="entry name" value="Single-stranded right-handed beta-helix, Pectin lyase-like"/>
    <property type="match status" value="1"/>
</dbReference>
<dbReference type="InterPro" id="IPR035513">
    <property type="entry name" value="Invertase/methylesterase_inhib"/>
</dbReference>
<dbReference type="InterPro" id="IPR012334">
    <property type="entry name" value="Pectin_lyas_fold"/>
</dbReference>
<dbReference type="InterPro" id="IPR011050">
    <property type="entry name" value="Pectin_lyase_fold/virulence"/>
</dbReference>
<dbReference type="InterPro" id="IPR033131">
    <property type="entry name" value="Pectinesterase_Asp_AS"/>
</dbReference>
<dbReference type="InterPro" id="IPR000070">
    <property type="entry name" value="Pectinesterase_cat"/>
</dbReference>
<dbReference type="InterPro" id="IPR006501">
    <property type="entry name" value="Pectinesterase_inhib_dom"/>
</dbReference>
<dbReference type="NCBIfam" id="TIGR01614">
    <property type="entry name" value="PME_inhib"/>
    <property type="match status" value="1"/>
</dbReference>
<dbReference type="PANTHER" id="PTHR31707">
    <property type="entry name" value="PECTINESTERASE"/>
    <property type="match status" value="1"/>
</dbReference>
<dbReference type="Pfam" id="PF01095">
    <property type="entry name" value="Pectinesterase"/>
    <property type="match status" value="1"/>
</dbReference>
<dbReference type="Pfam" id="PF04043">
    <property type="entry name" value="PMEI"/>
    <property type="match status" value="1"/>
</dbReference>
<dbReference type="SMART" id="SM00856">
    <property type="entry name" value="PMEI"/>
    <property type="match status" value="1"/>
</dbReference>
<dbReference type="SUPFAM" id="SSF51126">
    <property type="entry name" value="Pectin lyase-like"/>
    <property type="match status" value="1"/>
</dbReference>
<dbReference type="SUPFAM" id="SSF101148">
    <property type="entry name" value="Plant invertase/pectin methylesterase inhibitor"/>
    <property type="match status" value="1"/>
</dbReference>
<dbReference type="PROSITE" id="PS00503">
    <property type="entry name" value="PECTINESTERASE_2"/>
    <property type="match status" value="1"/>
</dbReference>
<feature type="chain" id="PRO_0000371707" description="Probable pectinesterase/pectinesterase inhibitor 61">
    <location>
        <begin position="1"/>
        <end position="587"/>
    </location>
</feature>
<feature type="transmembrane region" description="Helical" evidence="2">
    <location>
        <begin position="35"/>
        <end position="55"/>
    </location>
</feature>
<feature type="region of interest" description="Disordered" evidence="4">
    <location>
        <begin position="1"/>
        <end position="23"/>
    </location>
</feature>
<feature type="region of interest" description="Pectinesterase inhibitor 61">
    <location>
        <begin position="69"/>
        <end position="223"/>
    </location>
</feature>
<feature type="region of interest" description="Pectinesterase 61">
    <location>
        <begin position="273"/>
        <end position="571"/>
    </location>
</feature>
<feature type="compositionally biased region" description="Polar residues" evidence="4">
    <location>
        <begin position="10"/>
        <end position="19"/>
    </location>
</feature>
<feature type="active site" description="Proton donor; for pectinesterase activity" evidence="3">
    <location>
        <position position="402"/>
    </location>
</feature>
<feature type="active site" description="Nucleophile; for pectinesterase activity" evidence="3">
    <location>
        <position position="423"/>
    </location>
</feature>
<feature type="binding site" evidence="1">
    <location>
        <position position="349"/>
    </location>
    <ligand>
        <name>substrate</name>
        <note>for pectinesterase activity</note>
    </ligand>
</feature>
<feature type="binding site" evidence="1">
    <location>
        <position position="379"/>
    </location>
    <ligand>
        <name>substrate</name>
        <note>for pectinesterase activity</note>
    </ligand>
</feature>
<feature type="binding site" evidence="1">
    <location>
        <position position="491"/>
    </location>
    <ligand>
        <name>substrate</name>
        <note>for pectinesterase activity</note>
    </ligand>
</feature>
<feature type="binding site" evidence="1">
    <location>
        <position position="493"/>
    </location>
    <ligand>
        <name>substrate</name>
        <note>for pectinesterase activity</note>
    </ligand>
</feature>
<feature type="site" description="Transition state stabilizer" evidence="1">
    <location>
        <position position="401"/>
    </location>
</feature>
<feature type="disulfide bond" evidence="1">
    <location>
        <begin position="416"/>
        <end position="436"/>
    </location>
</feature>